<sequence length="501" mass="56155">MKKVILVVIDGLGLRSEIHGNAFQMANTPFFDKLFSEYPNTLIQASGEYVGLPDGQIGNSEVGHLNIGAGRVVYTGLSLINKALKDDKFKENQVFLNAFNKVKENNSTLHLMGLLSPGGVHSLEAHLFEILKQAHNSGVENVAVHVFGDGRDVAPKSIRESLEKLQELVDKYGYKIATISGRFYSMDRDKMFDRTEKAYKAILGKSGNEFSSALEYLDLQYSQNITDEFLEPAKNSTLDSRYFLKDNDAVIFFNFRPDRARQLSHLILNSSLYDYQPSHLVKVSDFVSMMKYEGIKCNIAYEEMLVNNPIGKVFEDANKTQLRVAETQKYAHVTYFMDGGVDVEYKNSKRIMVDSLKVESYADTPQMSAEEITSQVISHAKDFDLTILNYANPDMVGHTGVLESTLVALEVLDKQLSRLVKWAEKNKITVFITADHGNAEVMLDENNKPVTKHTSSPVMLVTSDKSLKLKPGKLANIAPTVLDYMGMAKPKEMNENSLLDK</sequence>
<name>GPMI_MYCS5</name>
<feature type="chain" id="PRO_0000212177" description="2,3-bisphosphoglycerate-independent phosphoglycerate mutase">
    <location>
        <begin position="1"/>
        <end position="501"/>
    </location>
</feature>
<feature type="active site" description="Phosphoserine intermediate" evidence="1">
    <location>
        <position position="60"/>
    </location>
</feature>
<feature type="binding site" evidence="1">
    <location>
        <position position="10"/>
    </location>
    <ligand>
        <name>Mn(2+)</name>
        <dbReference type="ChEBI" id="CHEBI:29035"/>
        <label>2</label>
    </ligand>
</feature>
<feature type="binding site" evidence="1">
    <location>
        <position position="60"/>
    </location>
    <ligand>
        <name>Mn(2+)</name>
        <dbReference type="ChEBI" id="CHEBI:29035"/>
        <label>2</label>
    </ligand>
</feature>
<feature type="binding site" evidence="1">
    <location>
        <position position="121"/>
    </location>
    <ligand>
        <name>substrate</name>
    </ligand>
</feature>
<feature type="binding site" evidence="1">
    <location>
        <begin position="151"/>
        <end position="152"/>
    </location>
    <ligand>
        <name>substrate</name>
    </ligand>
</feature>
<feature type="binding site" evidence="1">
    <location>
        <position position="182"/>
    </location>
    <ligand>
        <name>substrate</name>
    </ligand>
</feature>
<feature type="binding site" evidence="1">
    <location>
        <position position="188"/>
    </location>
    <ligand>
        <name>substrate</name>
    </ligand>
</feature>
<feature type="binding site" evidence="1">
    <location>
        <begin position="256"/>
        <end position="259"/>
    </location>
    <ligand>
        <name>substrate</name>
    </ligand>
</feature>
<feature type="binding site" evidence="1">
    <location>
        <position position="329"/>
    </location>
    <ligand>
        <name>substrate</name>
    </ligand>
</feature>
<feature type="binding site" evidence="1">
    <location>
        <position position="394"/>
    </location>
    <ligand>
        <name>Mn(2+)</name>
        <dbReference type="ChEBI" id="CHEBI:29035"/>
        <label>1</label>
    </ligand>
</feature>
<feature type="binding site" evidence="1">
    <location>
        <position position="398"/>
    </location>
    <ligand>
        <name>Mn(2+)</name>
        <dbReference type="ChEBI" id="CHEBI:29035"/>
        <label>1</label>
    </ligand>
</feature>
<feature type="binding site" evidence="1">
    <location>
        <position position="435"/>
    </location>
    <ligand>
        <name>Mn(2+)</name>
        <dbReference type="ChEBI" id="CHEBI:29035"/>
        <label>2</label>
    </ligand>
</feature>
<feature type="binding site" evidence="1">
    <location>
        <position position="436"/>
    </location>
    <ligand>
        <name>Mn(2+)</name>
        <dbReference type="ChEBI" id="CHEBI:29035"/>
        <label>2</label>
    </ligand>
</feature>
<feature type="binding site" evidence="1">
    <location>
        <position position="453"/>
    </location>
    <ligand>
        <name>Mn(2+)</name>
        <dbReference type="ChEBI" id="CHEBI:29035"/>
        <label>1</label>
    </ligand>
</feature>
<keyword id="KW-0324">Glycolysis</keyword>
<keyword id="KW-0413">Isomerase</keyword>
<keyword id="KW-0464">Manganese</keyword>
<keyword id="KW-0479">Metal-binding</keyword>
<keyword id="KW-1185">Reference proteome</keyword>
<reference key="1">
    <citation type="journal article" date="2005" name="J. Bacteriol.">
        <title>Swine and poultry pathogens: the complete genome sequences of two strains of Mycoplasma hyopneumoniae and a strain of Mycoplasma synoviae.</title>
        <authorList>
            <person name="Vasconcelos A.T.R."/>
            <person name="Ferreira H.B."/>
            <person name="Bizarro C.V."/>
            <person name="Bonatto S.L."/>
            <person name="Carvalho M.O."/>
            <person name="Pinto P.M."/>
            <person name="Almeida D.F."/>
            <person name="Almeida L.G.P."/>
            <person name="Almeida R."/>
            <person name="Alves-Junior L."/>
            <person name="Assuncao E.N."/>
            <person name="Azevedo V.A.C."/>
            <person name="Bogo M.R."/>
            <person name="Brigido M.M."/>
            <person name="Brocchi M."/>
            <person name="Burity H.A."/>
            <person name="Camargo A.A."/>
            <person name="Camargo S.S."/>
            <person name="Carepo M.S."/>
            <person name="Carraro D.M."/>
            <person name="de Mattos Cascardo J.C."/>
            <person name="Castro L.A."/>
            <person name="Cavalcanti G."/>
            <person name="Chemale G."/>
            <person name="Collevatti R.G."/>
            <person name="Cunha C.W."/>
            <person name="Dallagiovanna B."/>
            <person name="Dambros B.P."/>
            <person name="Dellagostin O.A."/>
            <person name="Falcao C."/>
            <person name="Fantinatti-Garboggini F."/>
            <person name="Felipe M.S.S."/>
            <person name="Fiorentin L."/>
            <person name="Franco G.R."/>
            <person name="Freitas N.S.A."/>
            <person name="Frias D."/>
            <person name="Grangeiro T.B."/>
            <person name="Grisard E.C."/>
            <person name="Guimaraes C.T."/>
            <person name="Hungria M."/>
            <person name="Jardim S.N."/>
            <person name="Krieger M.A."/>
            <person name="Laurino J.P."/>
            <person name="Lima L.F.A."/>
            <person name="Lopes M.I."/>
            <person name="Loreto E.L.S."/>
            <person name="Madeira H.M.F."/>
            <person name="Manfio G.P."/>
            <person name="Maranhao A.Q."/>
            <person name="Martinkovics C.T."/>
            <person name="Medeiros S.R.B."/>
            <person name="Moreira M.A.M."/>
            <person name="Neiva M."/>
            <person name="Ramalho-Neto C.E."/>
            <person name="Nicolas M.F."/>
            <person name="Oliveira S.C."/>
            <person name="Paixao R.F.C."/>
            <person name="Pedrosa F.O."/>
            <person name="Pena S.D.J."/>
            <person name="Pereira M."/>
            <person name="Pereira-Ferrari L."/>
            <person name="Piffer I."/>
            <person name="Pinto L.S."/>
            <person name="Potrich D.P."/>
            <person name="Salim A.C.M."/>
            <person name="Santos F.R."/>
            <person name="Schmitt R."/>
            <person name="Schneider M.P.C."/>
            <person name="Schrank A."/>
            <person name="Schrank I.S."/>
            <person name="Schuck A.F."/>
            <person name="Seuanez H.N."/>
            <person name="Silva D.W."/>
            <person name="Silva R."/>
            <person name="Silva S.C."/>
            <person name="Soares C.M.A."/>
            <person name="Souza K.R.L."/>
            <person name="Souza R.C."/>
            <person name="Staats C.C."/>
            <person name="Steffens M.B.R."/>
            <person name="Teixeira S.M.R."/>
            <person name="Urmenyi T.P."/>
            <person name="Vainstein M.H."/>
            <person name="Zuccherato L.W."/>
            <person name="Simpson A.J.G."/>
            <person name="Zaha A."/>
        </authorList>
    </citation>
    <scope>NUCLEOTIDE SEQUENCE [LARGE SCALE GENOMIC DNA]</scope>
    <source>
        <strain>53</strain>
    </source>
</reference>
<gene>
    <name evidence="1" type="primary">gpmI</name>
    <name type="synonym">pgm</name>
    <name type="ordered locus">MS53_0656</name>
</gene>
<proteinExistence type="inferred from homology"/>
<evidence type="ECO:0000255" key="1">
    <source>
        <dbReference type="HAMAP-Rule" id="MF_01038"/>
    </source>
</evidence>
<protein>
    <recommendedName>
        <fullName evidence="1">2,3-bisphosphoglycerate-independent phosphoglycerate mutase</fullName>
        <shortName evidence="1">BPG-independent PGAM</shortName>
        <shortName evidence="1">Phosphoglyceromutase</shortName>
        <shortName evidence="1">iPGM</shortName>
        <ecNumber evidence="1">5.4.2.12</ecNumber>
    </recommendedName>
</protein>
<accession>Q4A5A8</accession>
<comment type="function">
    <text evidence="1">Catalyzes the interconversion of 2-phosphoglycerate and 3-phosphoglycerate.</text>
</comment>
<comment type="catalytic activity">
    <reaction evidence="1">
        <text>(2R)-2-phosphoglycerate = (2R)-3-phosphoglycerate</text>
        <dbReference type="Rhea" id="RHEA:15901"/>
        <dbReference type="ChEBI" id="CHEBI:58272"/>
        <dbReference type="ChEBI" id="CHEBI:58289"/>
        <dbReference type="EC" id="5.4.2.12"/>
    </reaction>
</comment>
<comment type="cofactor">
    <cofactor evidence="1">
        <name>Mn(2+)</name>
        <dbReference type="ChEBI" id="CHEBI:29035"/>
    </cofactor>
    <text evidence="1">Binds 2 manganese ions per subunit.</text>
</comment>
<comment type="pathway">
    <text evidence="1">Carbohydrate degradation; glycolysis; pyruvate from D-glyceraldehyde 3-phosphate: step 3/5.</text>
</comment>
<comment type="subunit">
    <text evidence="1">Monomer.</text>
</comment>
<comment type="similarity">
    <text evidence="1">Belongs to the BPG-independent phosphoglycerate mutase family.</text>
</comment>
<organism>
    <name type="scientific">Mycoplasmopsis synoviae (strain 53)</name>
    <name type="common">Mycoplasma synoviae</name>
    <dbReference type="NCBI Taxonomy" id="262723"/>
    <lineage>
        <taxon>Bacteria</taxon>
        <taxon>Bacillati</taxon>
        <taxon>Mycoplasmatota</taxon>
        <taxon>Mycoplasmoidales</taxon>
        <taxon>Metamycoplasmataceae</taxon>
        <taxon>Mycoplasmopsis</taxon>
    </lineage>
</organism>
<dbReference type="EC" id="5.4.2.12" evidence="1"/>
<dbReference type="EMBL" id="AE017245">
    <property type="protein sequence ID" value="AAZ44063.2"/>
    <property type="molecule type" value="Genomic_DNA"/>
</dbReference>
<dbReference type="RefSeq" id="WP_041352137.1">
    <property type="nucleotide sequence ID" value="NC_007294.1"/>
</dbReference>
<dbReference type="SMR" id="Q4A5A8"/>
<dbReference type="STRING" id="262723.MS53_0656"/>
<dbReference type="KEGG" id="msy:MS53_0656"/>
<dbReference type="eggNOG" id="COG0696">
    <property type="taxonomic scope" value="Bacteria"/>
</dbReference>
<dbReference type="HOGENOM" id="CLU_026099_2_0_14"/>
<dbReference type="OrthoDB" id="9800863at2"/>
<dbReference type="UniPathway" id="UPA00109">
    <property type="reaction ID" value="UER00186"/>
</dbReference>
<dbReference type="Proteomes" id="UP000000549">
    <property type="component" value="Chromosome"/>
</dbReference>
<dbReference type="GO" id="GO:0005829">
    <property type="term" value="C:cytosol"/>
    <property type="evidence" value="ECO:0007669"/>
    <property type="project" value="TreeGrafter"/>
</dbReference>
<dbReference type="GO" id="GO:0030145">
    <property type="term" value="F:manganese ion binding"/>
    <property type="evidence" value="ECO:0007669"/>
    <property type="project" value="UniProtKB-UniRule"/>
</dbReference>
<dbReference type="GO" id="GO:0004619">
    <property type="term" value="F:phosphoglycerate mutase activity"/>
    <property type="evidence" value="ECO:0007669"/>
    <property type="project" value="UniProtKB-EC"/>
</dbReference>
<dbReference type="GO" id="GO:0006007">
    <property type="term" value="P:glucose catabolic process"/>
    <property type="evidence" value="ECO:0007669"/>
    <property type="project" value="InterPro"/>
</dbReference>
<dbReference type="GO" id="GO:0006096">
    <property type="term" value="P:glycolytic process"/>
    <property type="evidence" value="ECO:0007669"/>
    <property type="project" value="UniProtKB-UniRule"/>
</dbReference>
<dbReference type="CDD" id="cd16010">
    <property type="entry name" value="iPGM"/>
    <property type="match status" value="1"/>
</dbReference>
<dbReference type="FunFam" id="3.40.1450.10:FF:000002">
    <property type="entry name" value="2,3-bisphosphoglycerate-independent phosphoglycerate mutase"/>
    <property type="match status" value="1"/>
</dbReference>
<dbReference type="Gene3D" id="3.40.720.10">
    <property type="entry name" value="Alkaline Phosphatase, subunit A"/>
    <property type="match status" value="1"/>
</dbReference>
<dbReference type="Gene3D" id="3.40.1450.10">
    <property type="entry name" value="BPG-independent phosphoglycerate mutase, domain B"/>
    <property type="match status" value="1"/>
</dbReference>
<dbReference type="HAMAP" id="MF_01038">
    <property type="entry name" value="GpmI"/>
    <property type="match status" value="1"/>
</dbReference>
<dbReference type="InterPro" id="IPR017850">
    <property type="entry name" value="Alkaline_phosphatase_core_sf"/>
</dbReference>
<dbReference type="InterPro" id="IPR011258">
    <property type="entry name" value="BPG-indep_PGM_N"/>
</dbReference>
<dbReference type="InterPro" id="IPR006124">
    <property type="entry name" value="Metalloenzyme"/>
</dbReference>
<dbReference type="InterPro" id="IPR036646">
    <property type="entry name" value="PGAM_B_sf"/>
</dbReference>
<dbReference type="InterPro" id="IPR005995">
    <property type="entry name" value="Pgm_bpd_ind"/>
</dbReference>
<dbReference type="NCBIfam" id="TIGR01307">
    <property type="entry name" value="pgm_bpd_ind"/>
    <property type="match status" value="1"/>
</dbReference>
<dbReference type="PANTHER" id="PTHR31637">
    <property type="entry name" value="2,3-BISPHOSPHOGLYCERATE-INDEPENDENT PHOSPHOGLYCERATE MUTASE"/>
    <property type="match status" value="1"/>
</dbReference>
<dbReference type="PANTHER" id="PTHR31637:SF0">
    <property type="entry name" value="2,3-BISPHOSPHOGLYCERATE-INDEPENDENT PHOSPHOGLYCERATE MUTASE"/>
    <property type="match status" value="1"/>
</dbReference>
<dbReference type="Pfam" id="PF06415">
    <property type="entry name" value="iPGM_N"/>
    <property type="match status" value="1"/>
</dbReference>
<dbReference type="Pfam" id="PF01676">
    <property type="entry name" value="Metalloenzyme"/>
    <property type="match status" value="1"/>
</dbReference>
<dbReference type="PIRSF" id="PIRSF001492">
    <property type="entry name" value="IPGAM"/>
    <property type="match status" value="1"/>
</dbReference>
<dbReference type="SUPFAM" id="SSF64158">
    <property type="entry name" value="2,3-Bisphosphoglycerate-independent phosphoglycerate mutase, substrate-binding domain"/>
    <property type="match status" value="1"/>
</dbReference>
<dbReference type="SUPFAM" id="SSF53649">
    <property type="entry name" value="Alkaline phosphatase-like"/>
    <property type="match status" value="1"/>
</dbReference>